<comment type="function">
    <text evidence="1">NDH-1 shuttles electrons from NADH, via FMN and iron-sulfur (Fe-S) centers, to quinones in the respiratory chain. The immediate electron acceptor for the enzyme in this species is believed to be ubiquinone. Couples the redox reaction to proton translocation (for every two electrons transferred, four hydrogen ions are translocated across the cytoplasmic membrane), and thus conserves the redox energy in a proton gradient. This subunit may bind ubiquinone.</text>
</comment>
<comment type="catalytic activity">
    <reaction evidence="1">
        <text>a quinone + NADH + 5 H(+)(in) = a quinol + NAD(+) + 4 H(+)(out)</text>
        <dbReference type="Rhea" id="RHEA:57888"/>
        <dbReference type="ChEBI" id="CHEBI:15378"/>
        <dbReference type="ChEBI" id="CHEBI:24646"/>
        <dbReference type="ChEBI" id="CHEBI:57540"/>
        <dbReference type="ChEBI" id="CHEBI:57945"/>
        <dbReference type="ChEBI" id="CHEBI:132124"/>
    </reaction>
</comment>
<comment type="subunit">
    <text evidence="1">NDH-1 is composed of 13 different subunits. Subunits NuoA, H, J, K, L, M, N constitute the membrane sector of the complex.</text>
</comment>
<comment type="subcellular location">
    <subcellularLocation>
        <location evidence="1">Cell inner membrane</location>
        <topology evidence="1">Multi-pass membrane protein</topology>
    </subcellularLocation>
</comment>
<comment type="similarity">
    <text evidence="1">Belongs to the complex I subunit 1 family.</text>
</comment>
<feature type="chain" id="PRO_1000166629" description="NADH-quinone oxidoreductase subunit H">
    <location>
        <begin position="1"/>
        <end position="325"/>
    </location>
</feature>
<feature type="transmembrane region" description="Helical" evidence="1">
    <location>
        <begin position="11"/>
        <end position="31"/>
    </location>
</feature>
<feature type="transmembrane region" description="Helical" evidence="1">
    <location>
        <begin position="81"/>
        <end position="101"/>
    </location>
</feature>
<feature type="transmembrane region" description="Helical" evidence="1">
    <location>
        <begin position="114"/>
        <end position="134"/>
    </location>
</feature>
<feature type="transmembrane region" description="Helical" evidence="1">
    <location>
        <begin position="154"/>
        <end position="174"/>
    </location>
</feature>
<feature type="transmembrane region" description="Helical" evidence="1">
    <location>
        <begin position="186"/>
        <end position="206"/>
    </location>
</feature>
<feature type="transmembrane region" description="Helical" evidence="1">
    <location>
        <begin position="237"/>
        <end position="257"/>
    </location>
</feature>
<feature type="transmembrane region" description="Helical" evidence="1">
    <location>
        <begin position="265"/>
        <end position="285"/>
    </location>
</feature>
<feature type="transmembrane region" description="Helical" evidence="1">
    <location>
        <begin position="304"/>
        <end position="324"/>
    </location>
</feature>
<protein>
    <recommendedName>
        <fullName evidence="1">NADH-quinone oxidoreductase subunit H</fullName>
        <ecNumber evidence="1">7.1.1.-</ecNumber>
    </recommendedName>
    <alternativeName>
        <fullName evidence="1">NADH dehydrogenase I subunit H</fullName>
    </alternativeName>
    <alternativeName>
        <fullName evidence="1">NDH-1 subunit H</fullName>
    </alternativeName>
</protein>
<dbReference type="EC" id="7.1.1.-" evidence="1"/>
<dbReference type="EMBL" id="CU928162">
    <property type="protein sequence ID" value="CAR08927.2"/>
    <property type="molecule type" value="Genomic_DNA"/>
</dbReference>
<dbReference type="RefSeq" id="WP_000118512.1">
    <property type="nucleotide sequence ID" value="NC_011745.1"/>
</dbReference>
<dbReference type="SMR" id="B7MXW1"/>
<dbReference type="KEGG" id="ecq:ECED1_2746"/>
<dbReference type="HOGENOM" id="CLU_015134_0_1_6"/>
<dbReference type="Proteomes" id="UP000000748">
    <property type="component" value="Chromosome"/>
</dbReference>
<dbReference type="GO" id="GO:0005886">
    <property type="term" value="C:plasma membrane"/>
    <property type="evidence" value="ECO:0007669"/>
    <property type="project" value="UniProtKB-SubCell"/>
</dbReference>
<dbReference type="GO" id="GO:0003954">
    <property type="term" value="F:NADH dehydrogenase activity"/>
    <property type="evidence" value="ECO:0007669"/>
    <property type="project" value="TreeGrafter"/>
</dbReference>
<dbReference type="GO" id="GO:0016655">
    <property type="term" value="F:oxidoreductase activity, acting on NAD(P)H, quinone or similar compound as acceptor"/>
    <property type="evidence" value="ECO:0007669"/>
    <property type="project" value="UniProtKB-UniRule"/>
</dbReference>
<dbReference type="GO" id="GO:0048038">
    <property type="term" value="F:quinone binding"/>
    <property type="evidence" value="ECO:0007669"/>
    <property type="project" value="UniProtKB-KW"/>
</dbReference>
<dbReference type="GO" id="GO:0009060">
    <property type="term" value="P:aerobic respiration"/>
    <property type="evidence" value="ECO:0007669"/>
    <property type="project" value="TreeGrafter"/>
</dbReference>
<dbReference type="HAMAP" id="MF_01350">
    <property type="entry name" value="NDH1_NuoH"/>
    <property type="match status" value="1"/>
</dbReference>
<dbReference type="InterPro" id="IPR001694">
    <property type="entry name" value="NADH_UbQ_OxRdtase_su1/FPO"/>
</dbReference>
<dbReference type="InterPro" id="IPR018086">
    <property type="entry name" value="NADH_UbQ_OxRdtase_su1_CS"/>
</dbReference>
<dbReference type="NCBIfam" id="NF004740">
    <property type="entry name" value="PRK06076.1-1"/>
    <property type="match status" value="1"/>
</dbReference>
<dbReference type="NCBIfam" id="NF004741">
    <property type="entry name" value="PRK06076.1-2"/>
    <property type="match status" value="1"/>
</dbReference>
<dbReference type="PANTHER" id="PTHR11432">
    <property type="entry name" value="NADH DEHYDROGENASE SUBUNIT 1"/>
    <property type="match status" value="1"/>
</dbReference>
<dbReference type="PANTHER" id="PTHR11432:SF3">
    <property type="entry name" value="NADH-UBIQUINONE OXIDOREDUCTASE CHAIN 1"/>
    <property type="match status" value="1"/>
</dbReference>
<dbReference type="Pfam" id="PF00146">
    <property type="entry name" value="NADHdh"/>
    <property type="match status" value="1"/>
</dbReference>
<dbReference type="PROSITE" id="PS00667">
    <property type="entry name" value="COMPLEX1_ND1_1"/>
    <property type="match status" value="1"/>
</dbReference>
<dbReference type="PROSITE" id="PS00668">
    <property type="entry name" value="COMPLEX1_ND1_2"/>
    <property type="match status" value="1"/>
</dbReference>
<name>NUOH_ECO81</name>
<gene>
    <name evidence="1" type="primary">nuoH</name>
    <name type="ordered locus">ECED1_2746</name>
</gene>
<keyword id="KW-0997">Cell inner membrane</keyword>
<keyword id="KW-1003">Cell membrane</keyword>
<keyword id="KW-0472">Membrane</keyword>
<keyword id="KW-0520">NAD</keyword>
<keyword id="KW-0874">Quinone</keyword>
<keyword id="KW-1278">Translocase</keyword>
<keyword id="KW-0812">Transmembrane</keyword>
<keyword id="KW-1133">Transmembrane helix</keyword>
<keyword id="KW-0830">Ubiquinone</keyword>
<organism>
    <name type="scientific">Escherichia coli O81 (strain ED1a)</name>
    <dbReference type="NCBI Taxonomy" id="585397"/>
    <lineage>
        <taxon>Bacteria</taxon>
        <taxon>Pseudomonadati</taxon>
        <taxon>Pseudomonadota</taxon>
        <taxon>Gammaproteobacteria</taxon>
        <taxon>Enterobacterales</taxon>
        <taxon>Enterobacteriaceae</taxon>
        <taxon>Escherichia</taxon>
    </lineage>
</organism>
<reference key="1">
    <citation type="journal article" date="2009" name="PLoS Genet.">
        <title>Organised genome dynamics in the Escherichia coli species results in highly diverse adaptive paths.</title>
        <authorList>
            <person name="Touchon M."/>
            <person name="Hoede C."/>
            <person name="Tenaillon O."/>
            <person name="Barbe V."/>
            <person name="Baeriswyl S."/>
            <person name="Bidet P."/>
            <person name="Bingen E."/>
            <person name="Bonacorsi S."/>
            <person name="Bouchier C."/>
            <person name="Bouvet O."/>
            <person name="Calteau A."/>
            <person name="Chiapello H."/>
            <person name="Clermont O."/>
            <person name="Cruveiller S."/>
            <person name="Danchin A."/>
            <person name="Diard M."/>
            <person name="Dossat C."/>
            <person name="Karoui M.E."/>
            <person name="Frapy E."/>
            <person name="Garry L."/>
            <person name="Ghigo J.M."/>
            <person name="Gilles A.M."/>
            <person name="Johnson J."/>
            <person name="Le Bouguenec C."/>
            <person name="Lescat M."/>
            <person name="Mangenot S."/>
            <person name="Martinez-Jehanne V."/>
            <person name="Matic I."/>
            <person name="Nassif X."/>
            <person name="Oztas S."/>
            <person name="Petit M.A."/>
            <person name="Pichon C."/>
            <person name="Rouy Z."/>
            <person name="Ruf C.S."/>
            <person name="Schneider D."/>
            <person name="Tourret J."/>
            <person name="Vacherie B."/>
            <person name="Vallenet D."/>
            <person name="Medigue C."/>
            <person name="Rocha E.P.C."/>
            <person name="Denamur E."/>
        </authorList>
    </citation>
    <scope>NUCLEOTIDE SEQUENCE [LARGE SCALE GENOMIC DNA]</scope>
    <source>
        <strain>ED1a</strain>
    </source>
</reference>
<proteinExistence type="inferred from homology"/>
<sequence>MSWISPELIEILLTVLKAVVILLVVVTCGAFMSFGERRLLGLFQNRYGPNRVGWGGSLQLVADMIKMFFKEDWIPKFSDRVIFTLAPMIAFTSLLLAFAIVPVSPGWVVADLNIGILFFLMMAGLAVYAVLFAGWSSNNKYSLLGAMRASAQTLSYEVFLGLSLMGVVAQAGSFNMTDIVNSQAHVWNVIPQFFGFITFAIAGVAVCHRHPFDQPEAEQELADGYHIEYSGMKFGLFFVGEYIGIVTISALMVTLFFGGWQGPLLPPFIWFALKTAFFMMMFILIRASLPRPRYDQVMSFGWKICLPLTLINLLVTAAVILWQAQ</sequence>
<evidence type="ECO:0000255" key="1">
    <source>
        <dbReference type="HAMAP-Rule" id="MF_01350"/>
    </source>
</evidence>
<accession>B7MXW1</accession>